<comment type="subcellular location">
    <subcellularLocation>
        <location evidence="1">Endoplasmic reticulum membrane</location>
        <topology evidence="1">Multi-pass membrane protein</topology>
    </subcellularLocation>
</comment>
<comment type="sequence caution" evidence="5">
    <conflict type="erroneous gene model prediction">
        <sequence resource="EMBL-CDS" id="BAB08870"/>
    </conflict>
    <text>The predicted gene has been split into 2 genes: At5g58000 and At5g58003.</text>
</comment>
<evidence type="ECO:0000250" key="1"/>
<evidence type="ECO:0000255" key="2"/>
<evidence type="ECO:0000255" key="3">
    <source>
        <dbReference type="PROSITE-ProRule" id="PRU00170"/>
    </source>
</evidence>
<evidence type="ECO:0000256" key="4">
    <source>
        <dbReference type="SAM" id="MobiDB-lite"/>
    </source>
</evidence>
<evidence type="ECO:0000305" key="5"/>
<reference key="1">
    <citation type="journal article" date="1998" name="DNA Res.">
        <title>Structural analysis of Arabidopsis thaliana chromosome 5. VI. Sequence features of the regions of 1,367,185 bp covered by 19 physically assigned P1 and TAC clones.</title>
        <authorList>
            <person name="Kotani H."/>
            <person name="Nakamura Y."/>
            <person name="Sato S."/>
            <person name="Asamizu E."/>
            <person name="Kaneko T."/>
            <person name="Miyajima N."/>
            <person name="Tabata S."/>
        </authorList>
    </citation>
    <scope>NUCLEOTIDE SEQUENCE [LARGE SCALE GENOMIC DNA]</scope>
    <source>
        <strain>cv. Columbia</strain>
    </source>
</reference>
<reference key="2">
    <citation type="journal article" date="2017" name="Plant J.">
        <title>Araport11: a complete reannotation of the Arabidopsis thaliana reference genome.</title>
        <authorList>
            <person name="Cheng C.Y."/>
            <person name="Krishnakumar V."/>
            <person name="Chan A.P."/>
            <person name="Thibaud-Nissen F."/>
            <person name="Schobel S."/>
            <person name="Town C.D."/>
        </authorList>
    </citation>
    <scope>GENOME REANNOTATION</scope>
    <source>
        <strain>cv. Columbia</strain>
    </source>
</reference>
<reference key="3">
    <citation type="submission" date="2005-03" db="EMBL/GenBank/DDBJ databases">
        <title>Large-scale analysis of RIKEN Arabidopsis full-length (RAFL) cDNAs.</title>
        <authorList>
            <person name="Totoki Y."/>
            <person name="Seki M."/>
            <person name="Ishida J."/>
            <person name="Nakajima M."/>
            <person name="Enju A."/>
            <person name="Kamiya A."/>
            <person name="Narusaka M."/>
            <person name="Shin-i T."/>
            <person name="Nakagawa M."/>
            <person name="Sakamoto N."/>
            <person name="Oishi K."/>
            <person name="Kohara Y."/>
            <person name="Kobayashi M."/>
            <person name="Toyoda A."/>
            <person name="Sakaki Y."/>
            <person name="Sakurai T."/>
            <person name="Iida K."/>
            <person name="Akiyama K."/>
            <person name="Satou M."/>
            <person name="Toyoda T."/>
            <person name="Konagaya A."/>
            <person name="Carninci P."/>
            <person name="Kawai J."/>
            <person name="Hayashizaki Y."/>
            <person name="Shinozaki K."/>
        </authorList>
    </citation>
    <scope>NUCLEOTIDE SEQUENCE [LARGE SCALE MRNA]</scope>
    <source>
        <strain>cv. Columbia</strain>
    </source>
</reference>
<reference key="4">
    <citation type="journal article" date="2007" name="FEBS Lett.">
        <title>Reticulon-like proteins in Arabidopsis thaliana: structural organization and ER localization.</title>
        <authorList>
            <person name="Nziengui H."/>
            <person name="Bouhidel K."/>
            <person name="Pillon D."/>
            <person name="Der C."/>
            <person name="Marty F."/>
            <person name="Schoefs B."/>
        </authorList>
    </citation>
    <scope>GENE FAMILY</scope>
    <scope>NOMENCLATURE</scope>
</reference>
<sequence>MTPRRSLSSSDSNDKSPSVSVVAKKARSESVEGIEKKTTPGRVKKIRSEVCTTIVKAGEFDSVALRKVNSLPSPNSEKSDTKTEQEVTIIENSKIPEEVKEFGVCQEMIVSAKSNENEQIDNGDQEIGDQDDYEEDGDEEEEREVEKKSVDVKEINVAKENRVGGVEIKKFSQFQNRTSPSPSSVRKISPPVIKRATSVYSAPPNSTSSTDRFAEQEDNFTHSQSKLQSLVDLVMWRDVSRSTLVFGFGTFLIISSSYANDLNFSFISVVAYMGLIYLGLMFVLKSLIHRGMVEEERHKVVGVREEDVKRMLRLIMPYLNESLHQLRALFSGDPSTTLKMGVVLFVLARCGSSITLWNLAKFGFLGAFTIPKIFISYSTHFSAYGNFWMRRFRDAWESCNHKKAVALALFTLVWNLSSVTARVWAAFMLLVAFRYYQHKMIWTTDQADDDEDDNEEEEAEEEKEQVPPKHKRAPPHMMMPNKLKKIS</sequence>
<accession>Q56X72</accession>
<accession>Q9FJL6</accession>
<proteinExistence type="evidence at transcript level"/>
<organism>
    <name type="scientific">Arabidopsis thaliana</name>
    <name type="common">Mouse-ear cress</name>
    <dbReference type="NCBI Taxonomy" id="3702"/>
    <lineage>
        <taxon>Eukaryota</taxon>
        <taxon>Viridiplantae</taxon>
        <taxon>Streptophyta</taxon>
        <taxon>Embryophyta</taxon>
        <taxon>Tracheophyta</taxon>
        <taxon>Spermatophyta</taxon>
        <taxon>Magnoliopsida</taxon>
        <taxon>eudicotyledons</taxon>
        <taxon>Gunneridae</taxon>
        <taxon>Pentapetalae</taxon>
        <taxon>rosids</taxon>
        <taxon>malvids</taxon>
        <taxon>Brassicales</taxon>
        <taxon>Brassicaceae</taxon>
        <taxon>Camelineae</taxon>
        <taxon>Arabidopsis</taxon>
    </lineage>
</organism>
<keyword id="KW-0256">Endoplasmic reticulum</keyword>
<keyword id="KW-0472">Membrane</keyword>
<keyword id="KW-1185">Reference proteome</keyword>
<keyword id="KW-0812">Transmembrane</keyword>
<keyword id="KW-1133">Transmembrane helix</keyword>
<name>RTNLS_ARATH</name>
<protein>
    <recommendedName>
        <fullName>Reticulon-like protein B21</fullName>
        <shortName>AtRTNLB21</shortName>
    </recommendedName>
</protein>
<dbReference type="EMBL" id="AB013396">
    <property type="protein sequence ID" value="BAB08870.1"/>
    <property type="status" value="ALT_SEQ"/>
    <property type="molecule type" value="Genomic_DNA"/>
</dbReference>
<dbReference type="EMBL" id="CP002688">
    <property type="protein sequence ID" value="AED96983.1"/>
    <property type="molecule type" value="Genomic_DNA"/>
</dbReference>
<dbReference type="EMBL" id="AK221805">
    <property type="protein sequence ID" value="BAD93974.1"/>
    <property type="molecule type" value="mRNA"/>
</dbReference>
<dbReference type="RefSeq" id="NP_200608.3">
    <property type="nucleotide sequence ID" value="NM_125185.3"/>
</dbReference>
<dbReference type="FunCoup" id="Q56X72">
    <property type="interactions" value="44"/>
</dbReference>
<dbReference type="STRING" id="3702.Q56X72"/>
<dbReference type="iPTMnet" id="Q56X72"/>
<dbReference type="PaxDb" id="3702-AT5G58000.1"/>
<dbReference type="EnsemblPlants" id="AT5G58000.1">
    <property type="protein sequence ID" value="AT5G58000.1"/>
    <property type="gene ID" value="AT5G58000"/>
</dbReference>
<dbReference type="GeneID" id="835911"/>
<dbReference type="Gramene" id="AT5G58000.1">
    <property type="protein sequence ID" value="AT5G58000.1"/>
    <property type="gene ID" value="AT5G58000"/>
</dbReference>
<dbReference type="KEGG" id="ath:AT5G58000"/>
<dbReference type="Araport" id="AT5G58000"/>
<dbReference type="TAIR" id="AT5G58000">
    <property type="gene designation" value="RTN21"/>
</dbReference>
<dbReference type="eggNOG" id="ENOG502QQKT">
    <property type="taxonomic scope" value="Eukaryota"/>
</dbReference>
<dbReference type="HOGENOM" id="CLU_020845_1_0_1"/>
<dbReference type="InParanoid" id="Q56X72"/>
<dbReference type="OMA" id="KPNKIAN"/>
<dbReference type="OrthoDB" id="567788at2759"/>
<dbReference type="PRO" id="PR:Q56X72"/>
<dbReference type="Proteomes" id="UP000006548">
    <property type="component" value="Chromosome 5"/>
</dbReference>
<dbReference type="ExpressionAtlas" id="Q56X72">
    <property type="expression patterns" value="baseline and differential"/>
</dbReference>
<dbReference type="GO" id="GO:0005789">
    <property type="term" value="C:endoplasmic reticulum membrane"/>
    <property type="evidence" value="ECO:0007669"/>
    <property type="project" value="UniProtKB-SubCell"/>
</dbReference>
<dbReference type="InterPro" id="IPR003388">
    <property type="entry name" value="Reticulon"/>
</dbReference>
<dbReference type="InterPro" id="IPR044647">
    <property type="entry name" value="RTNLB17/18/21"/>
</dbReference>
<dbReference type="PANTHER" id="PTHR46626">
    <property type="entry name" value="RETICULON-LIKE PROTEIN B17"/>
    <property type="match status" value="1"/>
</dbReference>
<dbReference type="PANTHER" id="PTHR46626:SF1">
    <property type="entry name" value="RETICULON-LIKE PROTEIN B21"/>
    <property type="match status" value="1"/>
</dbReference>
<dbReference type="Pfam" id="PF02453">
    <property type="entry name" value="Reticulon"/>
    <property type="match status" value="1"/>
</dbReference>
<dbReference type="PROSITE" id="PS50845">
    <property type="entry name" value="RETICULON"/>
    <property type="match status" value="1"/>
</dbReference>
<feature type="chain" id="PRO_0000371300" description="Reticulon-like protein B21">
    <location>
        <begin position="1"/>
        <end position="487"/>
    </location>
</feature>
<feature type="transmembrane region" description="Helical" evidence="2">
    <location>
        <begin position="242"/>
        <end position="262"/>
    </location>
</feature>
<feature type="transmembrane region" description="Helical" evidence="2">
    <location>
        <begin position="264"/>
        <end position="284"/>
    </location>
</feature>
<feature type="transmembrane region" description="Helical" evidence="2">
    <location>
        <begin position="354"/>
        <end position="374"/>
    </location>
</feature>
<feature type="transmembrane region" description="Helical" evidence="2">
    <location>
        <begin position="413"/>
        <end position="433"/>
    </location>
</feature>
<feature type="domain" description="Reticulon" evidence="3">
    <location>
        <begin position="230"/>
        <end position="419"/>
    </location>
</feature>
<feature type="region of interest" description="Disordered" evidence="4">
    <location>
        <begin position="1"/>
        <end position="43"/>
    </location>
</feature>
<feature type="region of interest" description="Disordered" evidence="4">
    <location>
        <begin position="65"/>
        <end position="86"/>
    </location>
</feature>
<feature type="region of interest" description="Disordered" evidence="4">
    <location>
        <begin position="113"/>
        <end position="149"/>
    </location>
</feature>
<feature type="region of interest" description="Disordered" evidence="4">
    <location>
        <begin position="446"/>
        <end position="487"/>
    </location>
</feature>
<feature type="compositionally biased region" description="Low complexity" evidence="4">
    <location>
        <begin position="1"/>
        <end position="22"/>
    </location>
</feature>
<feature type="compositionally biased region" description="Basic and acidic residues" evidence="4">
    <location>
        <begin position="26"/>
        <end position="38"/>
    </location>
</feature>
<feature type="compositionally biased region" description="Acidic residues" evidence="4">
    <location>
        <begin position="118"/>
        <end position="143"/>
    </location>
</feature>
<feature type="compositionally biased region" description="Acidic residues" evidence="4">
    <location>
        <begin position="446"/>
        <end position="463"/>
    </location>
</feature>
<feature type="sequence conflict" description="In Ref. 3; BAD93974." evidence="5" ref="3">
    <original>E</original>
    <variation>G</variation>
    <location>
        <position position="455"/>
    </location>
</feature>
<gene>
    <name type="primary">RTNLB21</name>
    <name type="ordered locus">At5g58000</name>
    <name type="ORF">MTI20.26</name>
</gene>